<comment type="function">
    <text evidence="1">Sulfur carrier protein which probably makes part of a sulfur-relay system.</text>
</comment>
<comment type="subcellular location">
    <subcellularLocation>
        <location evidence="1">Cytoplasm</location>
    </subcellularLocation>
</comment>
<comment type="similarity">
    <text evidence="1">Belongs to the sulfur carrier protein TusA family.</text>
</comment>
<dbReference type="EMBL" id="CP000891">
    <property type="protein sequence ID" value="ABX47199.1"/>
    <property type="molecule type" value="Genomic_DNA"/>
</dbReference>
<dbReference type="RefSeq" id="WP_006083810.1">
    <property type="nucleotide sequence ID" value="NC_009997.1"/>
</dbReference>
<dbReference type="SMR" id="A9KU88"/>
<dbReference type="GeneID" id="11770387"/>
<dbReference type="KEGG" id="sbn:Sbal195_0017"/>
<dbReference type="HOGENOM" id="CLU_165255_5_0_6"/>
<dbReference type="Proteomes" id="UP000000770">
    <property type="component" value="Chromosome"/>
</dbReference>
<dbReference type="GO" id="GO:0005737">
    <property type="term" value="C:cytoplasm"/>
    <property type="evidence" value="ECO:0007669"/>
    <property type="project" value="UniProtKB-SubCell"/>
</dbReference>
<dbReference type="GO" id="GO:0097163">
    <property type="term" value="F:sulfur carrier activity"/>
    <property type="evidence" value="ECO:0007669"/>
    <property type="project" value="UniProtKB-UniRule"/>
</dbReference>
<dbReference type="GO" id="GO:0002143">
    <property type="term" value="P:tRNA wobble position uridine thiolation"/>
    <property type="evidence" value="ECO:0007669"/>
    <property type="project" value="InterPro"/>
</dbReference>
<dbReference type="CDD" id="cd03423">
    <property type="entry name" value="SirA"/>
    <property type="match status" value="1"/>
</dbReference>
<dbReference type="Gene3D" id="3.30.110.40">
    <property type="entry name" value="TusA-like domain"/>
    <property type="match status" value="1"/>
</dbReference>
<dbReference type="HAMAP" id="MF_00413">
    <property type="entry name" value="Thiourid_synth_A"/>
    <property type="match status" value="1"/>
</dbReference>
<dbReference type="InterPro" id="IPR022931">
    <property type="entry name" value="Sulphur_carrier_TusA"/>
</dbReference>
<dbReference type="InterPro" id="IPR001455">
    <property type="entry name" value="TusA-like"/>
</dbReference>
<dbReference type="InterPro" id="IPR036868">
    <property type="entry name" value="TusA-like_sf"/>
</dbReference>
<dbReference type="NCBIfam" id="NF001423">
    <property type="entry name" value="PRK00299.1"/>
    <property type="match status" value="1"/>
</dbReference>
<dbReference type="PANTHER" id="PTHR33279:SF2">
    <property type="entry name" value="SULFUR CARRIER PROTEIN TUSA"/>
    <property type="match status" value="1"/>
</dbReference>
<dbReference type="PANTHER" id="PTHR33279">
    <property type="entry name" value="SULFUR CARRIER PROTEIN YEDF-RELATED"/>
    <property type="match status" value="1"/>
</dbReference>
<dbReference type="Pfam" id="PF01206">
    <property type="entry name" value="TusA"/>
    <property type="match status" value="1"/>
</dbReference>
<dbReference type="SUPFAM" id="SSF64307">
    <property type="entry name" value="SirA-like"/>
    <property type="match status" value="1"/>
</dbReference>
<dbReference type="PROSITE" id="PS01148">
    <property type="entry name" value="UPF0033"/>
    <property type="match status" value="1"/>
</dbReference>
<reference key="1">
    <citation type="submission" date="2007-11" db="EMBL/GenBank/DDBJ databases">
        <title>Complete sequence of chromosome of Shewanella baltica OS195.</title>
        <authorList>
            <consortium name="US DOE Joint Genome Institute"/>
            <person name="Copeland A."/>
            <person name="Lucas S."/>
            <person name="Lapidus A."/>
            <person name="Barry K."/>
            <person name="Glavina del Rio T."/>
            <person name="Dalin E."/>
            <person name="Tice H."/>
            <person name="Pitluck S."/>
            <person name="Chain P."/>
            <person name="Malfatti S."/>
            <person name="Shin M."/>
            <person name="Vergez L."/>
            <person name="Schmutz J."/>
            <person name="Larimer F."/>
            <person name="Land M."/>
            <person name="Hauser L."/>
            <person name="Kyrpides N."/>
            <person name="Kim E."/>
            <person name="Brettar I."/>
            <person name="Rodrigues J."/>
            <person name="Konstantinidis K."/>
            <person name="Klappenbach J."/>
            <person name="Hofle M."/>
            <person name="Tiedje J."/>
            <person name="Richardson P."/>
        </authorList>
    </citation>
    <scope>NUCLEOTIDE SEQUENCE [LARGE SCALE GENOMIC DNA]</scope>
    <source>
        <strain>OS195</strain>
    </source>
</reference>
<proteinExistence type="inferred from homology"/>
<keyword id="KW-0963">Cytoplasm</keyword>
<accession>A9KU88</accession>
<name>TUSA_SHEB9</name>
<gene>
    <name evidence="1" type="primary">tusA</name>
    <name type="ordered locus">Sbal195_0017</name>
</gene>
<evidence type="ECO:0000255" key="1">
    <source>
        <dbReference type="HAMAP-Rule" id="MF_00413"/>
    </source>
</evidence>
<feature type="chain" id="PRO_1000080497" description="Sulfur carrier protein TusA">
    <location>
        <begin position="1"/>
        <end position="81"/>
    </location>
</feature>
<feature type="active site" description="Cysteine persulfide intermediate" evidence="1">
    <location>
        <position position="19"/>
    </location>
</feature>
<sequence length="81" mass="9087">MNDAFSTAQHRLDALGLRCPEPVMMVRKTVRQMAAGETLLIIADDPATTRDIPSFCEFMDHTLIASETTQTPYQYLIKKGL</sequence>
<protein>
    <recommendedName>
        <fullName evidence="1">Sulfur carrier protein TusA</fullName>
    </recommendedName>
</protein>
<organism>
    <name type="scientific">Shewanella baltica (strain OS195)</name>
    <dbReference type="NCBI Taxonomy" id="399599"/>
    <lineage>
        <taxon>Bacteria</taxon>
        <taxon>Pseudomonadati</taxon>
        <taxon>Pseudomonadota</taxon>
        <taxon>Gammaproteobacteria</taxon>
        <taxon>Alteromonadales</taxon>
        <taxon>Shewanellaceae</taxon>
        <taxon>Shewanella</taxon>
    </lineage>
</organism>